<dbReference type="EC" id="4.2.3.167" evidence="3"/>
<dbReference type="EC" id="4.2.3.168" evidence="3"/>
<dbReference type="EMBL" id="LUHQ01000005">
    <property type="protein sequence ID" value="OAO90606.1"/>
    <property type="molecule type" value="Genomic_DNA"/>
</dbReference>
<dbReference type="SMR" id="A0A178U9Y5"/>
<dbReference type="BRENDA" id="4.2.3.167">
    <property type="organism ID" value="399"/>
</dbReference>
<dbReference type="BRENDA" id="4.2.3.168">
    <property type="organism ID" value="399"/>
</dbReference>
<dbReference type="UniPathway" id="UPA00213"/>
<dbReference type="Proteomes" id="UP000078284">
    <property type="component" value="Chromosome 5"/>
</dbReference>
<dbReference type="ExpressionAtlas" id="A0A178U9Y5">
    <property type="expression patterns" value="baseline and differential"/>
</dbReference>
<dbReference type="GO" id="GO:0009507">
    <property type="term" value="C:chloroplast"/>
    <property type="evidence" value="ECO:0000314"/>
    <property type="project" value="UniProtKB"/>
</dbReference>
<dbReference type="GO" id="GO:0000287">
    <property type="term" value="F:magnesium ion binding"/>
    <property type="evidence" value="ECO:0007669"/>
    <property type="project" value="InterPro"/>
</dbReference>
<dbReference type="GO" id="GO:0010333">
    <property type="term" value="F:terpene synthase activity"/>
    <property type="evidence" value="ECO:0000314"/>
    <property type="project" value="UniProtKB"/>
</dbReference>
<dbReference type="GO" id="GO:0016102">
    <property type="term" value="P:diterpenoid biosynthetic process"/>
    <property type="evidence" value="ECO:0007669"/>
    <property type="project" value="InterPro"/>
</dbReference>
<dbReference type="GO" id="GO:0016114">
    <property type="term" value="P:terpenoid biosynthetic process"/>
    <property type="evidence" value="ECO:0000314"/>
    <property type="project" value="UniProtKB"/>
</dbReference>
<dbReference type="CDD" id="cd00684">
    <property type="entry name" value="Terpene_cyclase_plant_C1"/>
    <property type="match status" value="1"/>
</dbReference>
<dbReference type="FunFam" id="1.10.600.10:FF:000007">
    <property type="entry name" value="Isoprene synthase, chloroplastic"/>
    <property type="match status" value="1"/>
</dbReference>
<dbReference type="FunFam" id="1.50.10.130:FF:000001">
    <property type="entry name" value="Isoprene synthase, chloroplastic"/>
    <property type="match status" value="1"/>
</dbReference>
<dbReference type="Gene3D" id="1.10.600.10">
    <property type="entry name" value="Farnesyl Diphosphate Synthase"/>
    <property type="match status" value="1"/>
</dbReference>
<dbReference type="Gene3D" id="1.50.10.130">
    <property type="entry name" value="Terpene synthase, N-terminal domain"/>
    <property type="match status" value="1"/>
</dbReference>
<dbReference type="InterPro" id="IPR008949">
    <property type="entry name" value="Isoprenoid_synthase_dom_sf"/>
</dbReference>
<dbReference type="InterPro" id="IPR034741">
    <property type="entry name" value="Terpene_cyclase-like_1_C"/>
</dbReference>
<dbReference type="InterPro" id="IPR044814">
    <property type="entry name" value="Terpene_cyclase_plant_C1"/>
</dbReference>
<dbReference type="InterPro" id="IPR001906">
    <property type="entry name" value="Terpene_synth_N"/>
</dbReference>
<dbReference type="InterPro" id="IPR036965">
    <property type="entry name" value="Terpene_synth_N_sf"/>
</dbReference>
<dbReference type="InterPro" id="IPR050148">
    <property type="entry name" value="Terpene_synthase-like"/>
</dbReference>
<dbReference type="InterPro" id="IPR005630">
    <property type="entry name" value="Terpene_synthase_metal-bd"/>
</dbReference>
<dbReference type="InterPro" id="IPR008930">
    <property type="entry name" value="Terpenoid_cyclase/PrenylTrfase"/>
</dbReference>
<dbReference type="PANTHER" id="PTHR31225">
    <property type="entry name" value="OS04G0344100 PROTEIN-RELATED"/>
    <property type="match status" value="1"/>
</dbReference>
<dbReference type="PANTHER" id="PTHR31225:SF242">
    <property type="entry name" value="TERPENOID SYNTHASE 9"/>
    <property type="match status" value="1"/>
</dbReference>
<dbReference type="Pfam" id="PF01397">
    <property type="entry name" value="Terpene_synth"/>
    <property type="match status" value="1"/>
</dbReference>
<dbReference type="Pfam" id="PF03936">
    <property type="entry name" value="Terpene_synth_C"/>
    <property type="match status" value="1"/>
</dbReference>
<dbReference type="SFLD" id="SFLDS00005">
    <property type="entry name" value="Isoprenoid_Synthase_Type_I"/>
    <property type="match status" value="1"/>
</dbReference>
<dbReference type="SFLD" id="SFLDG01019">
    <property type="entry name" value="Terpene_Cyclase_Like_1_C_Termi"/>
    <property type="match status" value="1"/>
</dbReference>
<dbReference type="SUPFAM" id="SSF48239">
    <property type="entry name" value="Terpenoid cyclases/Protein prenyltransferases"/>
    <property type="match status" value="1"/>
</dbReference>
<dbReference type="SUPFAM" id="SSF48576">
    <property type="entry name" value="Terpenoid synthases"/>
    <property type="match status" value="1"/>
</dbReference>
<name>TP20L_ARATH</name>
<organism>
    <name type="scientific">Arabidopsis thaliana</name>
    <name type="common">Mouse-ear cress</name>
    <dbReference type="NCBI Taxonomy" id="3702"/>
    <lineage>
        <taxon>Eukaryota</taxon>
        <taxon>Viridiplantae</taxon>
        <taxon>Streptophyta</taxon>
        <taxon>Embryophyta</taxon>
        <taxon>Tracheophyta</taxon>
        <taxon>Spermatophyta</taxon>
        <taxon>Magnoliopsida</taxon>
        <taxon>eudicotyledons</taxon>
        <taxon>Gunneridae</taxon>
        <taxon>Pentapetalae</taxon>
        <taxon>rosids</taxon>
        <taxon>malvids</taxon>
        <taxon>Brassicales</taxon>
        <taxon>Brassicaceae</taxon>
        <taxon>Camelineae</taxon>
        <taxon>Arabidopsis</taxon>
    </lineage>
</organism>
<feature type="transit peptide" description="Chloroplast" evidence="2">
    <location>
        <begin position="1"/>
        <end position="52"/>
    </location>
</feature>
<feature type="chain" id="PRO_0000442457" description="Bifunctional dolabella-3,7-dien-18-ol synthase/dolathalia-3,7,11-triene synthase TPS20, chloroplastic">
    <location>
        <begin position="53"/>
        <end position="592"/>
    </location>
</feature>
<feature type="short sequence motif" description="DDXXD motif" evidence="4">
    <location>
        <begin position="349"/>
        <end position="353"/>
    </location>
</feature>
<feature type="binding site" evidence="1">
    <location>
        <position position="349"/>
    </location>
    <ligand>
        <name>Mg(2+)</name>
        <dbReference type="ChEBI" id="CHEBI:18420"/>
        <label>1</label>
    </ligand>
</feature>
<feature type="binding site" evidence="1">
    <location>
        <position position="349"/>
    </location>
    <ligand>
        <name>Mg(2+)</name>
        <dbReference type="ChEBI" id="CHEBI:18420"/>
        <label>2</label>
    </ligand>
</feature>
<feature type="binding site" evidence="1">
    <location>
        <position position="353"/>
    </location>
    <ligand>
        <name>Mg(2+)</name>
        <dbReference type="ChEBI" id="CHEBI:18420"/>
        <label>1</label>
    </ligand>
</feature>
<feature type="binding site" evidence="1">
    <location>
        <position position="353"/>
    </location>
    <ligand>
        <name>Mg(2+)</name>
        <dbReference type="ChEBI" id="CHEBI:18420"/>
        <label>2</label>
    </ligand>
</feature>
<feature type="binding site" evidence="1">
    <location>
        <position position="491"/>
    </location>
    <ligand>
        <name>Mg(2+)</name>
        <dbReference type="ChEBI" id="CHEBI:18420"/>
        <label>3</label>
    </ligand>
</feature>
<feature type="binding site" evidence="1">
    <location>
        <position position="495"/>
    </location>
    <ligand>
        <name>Mg(2+)</name>
        <dbReference type="ChEBI" id="CHEBI:18420"/>
        <label>3</label>
    </ligand>
</feature>
<feature type="binding site" evidence="1">
    <location>
        <position position="499"/>
    </location>
    <ligand>
        <name>Mg(2+)</name>
        <dbReference type="ChEBI" id="CHEBI:18420"/>
        <label>3</label>
    </ligand>
</feature>
<reference key="1">
    <citation type="journal article" date="2016" name="Proc. Natl. Acad. Sci. U.S.A.">
        <title>Chromosome-level assembly of Arabidopsis thaliana Ler reveals the extent of translocation and inversion polymorphisms.</title>
        <authorList>
            <person name="Zapata L."/>
            <person name="Ding J."/>
            <person name="Willing E.M."/>
            <person name="Hartwig B."/>
            <person name="Bezdan D."/>
            <person name="Jiao W.B."/>
            <person name="Patel V."/>
            <person name="Velikkakam James G."/>
            <person name="Koornneef M."/>
            <person name="Ossowski S."/>
            <person name="Schneeberger K."/>
        </authorList>
    </citation>
    <scope>NUCLEOTIDE SEQUENCE [LARGE SCALE GENOMIC DNA]</scope>
    <source>
        <strain>cv. Landsberg erecta</strain>
    </source>
</reference>
<reference key="2">
    <citation type="journal article" date="2016" name="Front. Plant Sci.">
        <title>Identification of a dolabellane type diterpene synthase and other root-expressed diterpene synthases in Arabidopsis.</title>
        <authorList>
            <person name="Wang Q."/>
            <person name="Jia M."/>
            <person name="Huh J.H."/>
            <person name="Muchlinski A."/>
            <person name="Peters R.J."/>
            <person name="Tholl D."/>
        </authorList>
    </citation>
    <scope>FUNCTION</scope>
    <scope>CATALYTIC ACTIVITY</scope>
    <scope>BIOPHYSICOCHEMICAL PROPERTIES</scope>
    <scope>SUBCELLULAR LOCATION</scope>
    <source>
        <strain>cv. Cvi-0</strain>
    </source>
</reference>
<gene>
    <name evidence="4" type="primary">TPS20</name>
    <name evidence="5" type="ordered locus">AXX17_At5g46650</name>
</gene>
<comment type="function">
    <text evidence="3">Involved in the biosynthesis of diterpenes in roots. Possesses dolabella-3,7-dien-18-ol synthase activity and dolathalia-3,7,11-triene synthase activity in vitro. Catalyzes the formation of dolabella-3,7-dien-18-ol and dolathalia-3,7,11-triene from geranygeranyl diphosphate (GGPP). Does not seem to be involved in sesquiterpene biosynthesis.</text>
</comment>
<comment type="catalytic activity">
    <reaction evidence="3">
        <text>(2E,6E,10E)-geranylgeranyl diphosphate + H2O = (3E,7E)-dolabella-3,7-dien-18-ol + diphosphate</text>
        <dbReference type="Rhea" id="RHEA:16345"/>
        <dbReference type="ChEBI" id="CHEBI:15377"/>
        <dbReference type="ChEBI" id="CHEBI:33019"/>
        <dbReference type="ChEBI" id="CHEBI:58756"/>
        <dbReference type="ChEBI" id="CHEBI:137565"/>
        <dbReference type="EC" id="4.2.3.167"/>
    </reaction>
</comment>
<comment type="catalytic activity">
    <reaction evidence="3">
        <text>(2E,6E,10E)-geranylgeranyl diphosphate = (3E,7E)-dolathalia-3,7,11-triene + diphosphate</text>
        <dbReference type="Rhea" id="RHEA:54040"/>
        <dbReference type="ChEBI" id="CHEBI:33019"/>
        <dbReference type="ChEBI" id="CHEBI:58756"/>
        <dbReference type="ChEBI" id="CHEBI:138039"/>
        <dbReference type="EC" id="4.2.3.168"/>
    </reaction>
</comment>
<comment type="cofactor">
    <cofactor evidence="1">
        <name>Mg(2+)</name>
        <dbReference type="ChEBI" id="CHEBI:18420"/>
    </cofactor>
    <cofactor evidence="1">
        <name>Mn(2+)</name>
        <dbReference type="ChEBI" id="CHEBI:29035"/>
    </cofactor>
    <text evidence="1">Binds 3 Mg(2+) or Mn(2+) ions per subunit.</text>
</comment>
<comment type="biophysicochemical properties">
    <kinetics>
        <KM evidence="3">6.29 uM for geranylgeranyl diphosphate</KM>
        <Vmax evidence="3">12.76 pmol/sec/mg enzyme toward geranylgeranyl diphosphate</Vmax>
        <text evidence="3">kcat is 0.00083 sec(-1) with geranylgeranyl diphosphate as substrate.</text>
    </kinetics>
</comment>
<comment type="pathway">
    <text evidence="4">Secondary metabolite biosynthesis; terpenoid biosynthesis.</text>
</comment>
<comment type="subcellular location">
    <subcellularLocation>
        <location evidence="3">Plastid</location>
        <location evidence="3">Chloroplast</location>
    </subcellularLocation>
</comment>
<comment type="domain">
    <text evidence="4">The Asp-Asp-Xaa-Xaa-Asp/Glu (DDXXD/E) motif is important for the catalytic activity, presumably through binding to Mg(2+).</text>
</comment>
<comment type="similarity">
    <text evidence="4">Belongs to the terpene synthase family. Tpsa subfamily.</text>
</comment>
<comment type="caution">
    <text evidence="3">TPS20 in Arabidopsis ecotype Columbia lacks dolabellane-type diterpene synthase activity because of a 17 amino acid deletion and several mutations in its sequence. TPS20 protein in ecotype Cvi is functional and possesses dolabellane-type diterpene synthase activity.</text>
</comment>
<evidence type="ECO:0000250" key="1">
    <source>
        <dbReference type="UniProtKB" id="Q40577"/>
    </source>
</evidence>
<evidence type="ECO:0000255" key="2"/>
<evidence type="ECO:0000269" key="3">
    <source>
    </source>
</evidence>
<evidence type="ECO:0000305" key="4"/>
<evidence type="ECO:0000312" key="5">
    <source>
        <dbReference type="EMBL" id="OAO90606.1"/>
    </source>
</evidence>
<sequence length="592" mass="69021">MEAITKNGSLSQTLVHCGPKSLSSFIPVRCLRFSKNPFPKKLVVTRARTSINSDHEAANRPLFQFPPSLLDDRFLSISANQSEIDSLGRDIEALKAKVSEKLVCMDVKERIHLIHLLVSLGVAYHFEKQIEEFLKVDFENVEDMNLGEEDMYSISVIFRVFRLYRHKLSSDVFNRFKEENGDFKKCLLDDVRGMLSFYEASYFGTNTEEILDEAMGFTRKHLELFVGGSNEEHLSGHIKNVLYLSQQENAEVVMSREYIQFYEQETHHDETLLKFAKINFKFMQLHYVQELQTIVKWWKELDLESKIPNYYRVRAVECLYWAMAVYMEPQYSVARIILSKSLVLWTIIDDLYDAYCTLPEAIAFTENMERWETDAKDMPDHMKVLMRSFIDLHEDFKREVILEGRLYSVEYGIDECKRLFREDLKLSKWARTGYIPNYDEYMEVGIVTAGIDMTVAFAFIGMGEAGKEAFDWIRSRPKFIQTLDIKGRLRDDVATYKDEMARGEIATGINCYMKQYKVTEEEAFLEFHRRIKHTSKLVNEEYFKTTVPLKLVRIAFNVGRAIDTNYKHGDGLTYGGIVEGQITSLFLDLITI</sequence>
<keyword id="KW-0150">Chloroplast</keyword>
<keyword id="KW-0456">Lyase</keyword>
<keyword id="KW-0460">Magnesium</keyword>
<keyword id="KW-0464">Manganese</keyword>
<keyword id="KW-0479">Metal-binding</keyword>
<keyword id="KW-0934">Plastid</keyword>
<keyword id="KW-0809">Transit peptide</keyword>
<protein>
    <recommendedName>
        <fullName evidence="4">Bifunctional dolabella-3,7-dien-18-ol synthase/dolathalia-3,7,11-triene synthase TPS20, chloroplastic</fullName>
        <ecNumber evidence="3">4.2.3.167</ecNumber>
        <ecNumber evidence="3">4.2.3.168</ecNumber>
    </recommendedName>
    <alternativeName>
        <fullName evidence="4">Terpenoid synthase 20</fullName>
        <shortName evidence="4">AtTPS20</shortName>
    </alternativeName>
</protein>
<proteinExistence type="evidence at protein level"/>
<accession>A0A178U9Y5</accession>